<organism>
    <name type="scientific">Mycobacterium bovis (strain BCG / Pasteur 1173P2)</name>
    <dbReference type="NCBI Taxonomy" id="410289"/>
    <lineage>
        <taxon>Bacteria</taxon>
        <taxon>Bacillati</taxon>
        <taxon>Actinomycetota</taxon>
        <taxon>Actinomycetes</taxon>
        <taxon>Mycobacteriales</taxon>
        <taxon>Mycobacteriaceae</taxon>
        <taxon>Mycobacterium</taxon>
        <taxon>Mycobacterium tuberculosis complex</taxon>
    </lineage>
</organism>
<keyword id="KW-1003">Cell membrane</keyword>
<keyword id="KW-0449">Lipoprotein</keyword>
<keyword id="KW-0472">Membrane</keyword>
<keyword id="KW-0564">Palmitate</keyword>
<keyword id="KW-0592">Phosphate transport</keyword>
<keyword id="KW-0964">Secreted</keyword>
<keyword id="KW-0732">Signal</keyword>
<keyword id="KW-0813">Transport</keyword>
<proteinExistence type="evidence at protein level"/>
<accession>A0A0H3MBK5</accession>
<evidence type="ECO:0000250" key="1">
    <source>
        <dbReference type="UniProtKB" id="P9WGT7"/>
    </source>
</evidence>
<evidence type="ECO:0000255" key="2">
    <source>
        <dbReference type="PROSITE-ProRule" id="PRU00303"/>
    </source>
</evidence>
<evidence type="ECO:0000269" key="3">
    <source>
    </source>
</evidence>
<evidence type="ECO:0000303" key="4">
    <source>
    </source>
</evidence>
<evidence type="ECO:0000305" key="5"/>
<comment type="function">
    <text evidence="1 5">Functions in inorganic phosphate uptake, is probably the main carrier for phosphate uptake (By similarity). Part of the ABC transporter complex PstSACB involved in phosphate import (Probable).</text>
</comment>
<comment type="subunit">
    <text evidence="5">The complex is composed of two ATP-binding proteins (PstB), two transmembrane proteins (PstC and PstA) and a solute-binding protein (PstS).</text>
</comment>
<comment type="subcellular location">
    <subcellularLocation>
        <location evidence="2">Cell membrane</location>
        <topology evidence="2">Lipid-anchor</topology>
    </subcellularLocation>
    <subcellularLocation>
        <location evidence="3">Secreted</location>
    </subcellularLocation>
    <text evidence="3">Present on the cell surface.</text>
</comment>
<comment type="induction">
    <text evidence="3">By phosphate starvation (at protein level).</text>
</comment>
<comment type="similarity">
    <text evidence="5">Belongs to the PstS family.</text>
</comment>
<protein>
    <recommendedName>
        <fullName evidence="4">Phosphate-binding protein PstS3</fullName>
        <shortName>PstS-3</shortName>
    </recommendedName>
    <alternativeName>
        <fullName>38-kDa lipoprotein</fullName>
        <shortName>P38</shortName>
    </alternativeName>
</protein>
<feature type="signal peptide" evidence="2">
    <location>
        <begin position="1"/>
        <end position="22"/>
    </location>
</feature>
<feature type="chain" id="PRO_5002615476" description="Phosphate-binding protein PstS3">
    <location>
        <begin position="23"/>
        <end position="370"/>
    </location>
</feature>
<feature type="binding site" evidence="1">
    <location>
        <begin position="56"/>
        <end position="58"/>
    </location>
    <ligand>
        <name>phosphate</name>
        <dbReference type="ChEBI" id="CHEBI:43474"/>
    </ligand>
</feature>
<feature type="binding site" evidence="1">
    <location>
        <position position="86"/>
    </location>
    <ligand>
        <name>phosphate</name>
        <dbReference type="ChEBI" id="CHEBI:43474"/>
    </ligand>
</feature>
<feature type="binding site" evidence="1">
    <location>
        <position position="104"/>
    </location>
    <ligand>
        <name>phosphate</name>
        <dbReference type="ChEBI" id="CHEBI:43474"/>
    </ligand>
</feature>
<feature type="binding site" evidence="1">
    <location>
        <begin position="191"/>
        <end position="193"/>
    </location>
    <ligand>
        <name>phosphate</name>
        <dbReference type="ChEBI" id="CHEBI:43474"/>
    </ligand>
</feature>
<feature type="lipid moiety-binding region" description="N-palmitoyl cysteine" evidence="2">
    <location>
        <position position="23"/>
    </location>
</feature>
<feature type="lipid moiety-binding region" description="S-diacylglycerol cysteine" evidence="2">
    <location>
        <position position="23"/>
    </location>
</feature>
<sequence length="370" mass="37953">MKLNRFGAAVGVLAAGALVLSACGNDDNVTGGGATTGQASAKVDCGGKKTLKASGSTAQANAMTRFVNVFEQACPGQTLNYTANGSGAGISEFNGNQTDFGGSDVPLSKDEAAAAQRRCGSPAWNLPVVFGPIAVTYNLNSVSSLNLDGPTLAKIFNGSITQWNNPAIQALNRDFTLPGERIHVVFRSDESGTTDNFQRYLQAASNGAWGKGAGKSFQGGVGEGARGNDGTSAAAKNTPGSITYNEWSFAQAQHLTMANIVTSAGGDPVAITIDSVGQTIAGATISGVGNDLVLDTDSFYRPKRPGSYPIVLATYEIVCSKYPDSQVGTAVKAFLQSTIGAGQSGLGDNGYIPIPDEFKSRLSTAVNAIA</sequence>
<dbReference type="EMBL" id="AM408590">
    <property type="protein sequence ID" value="CAL70966.1"/>
    <property type="molecule type" value="Genomic_DNA"/>
</dbReference>
<dbReference type="SMR" id="A0A0H3MBK5"/>
<dbReference type="KEGG" id="mbb:BCG_0980"/>
<dbReference type="HOGENOM" id="CLU_034528_0_0_11"/>
<dbReference type="Proteomes" id="UP000001472">
    <property type="component" value="Chromosome"/>
</dbReference>
<dbReference type="GO" id="GO:0043190">
    <property type="term" value="C:ATP-binding cassette (ABC) transporter complex"/>
    <property type="evidence" value="ECO:0007669"/>
    <property type="project" value="InterPro"/>
</dbReference>
<dbReference type="GO" id="GO:0005576">
    <property type="term" value="C:extracellular region"/>
    <property type="evidence" value="ECO:0007669"/>
    <property type="project" value="UniProtKB-SubCell"/>
</dbReference>
<dbReference type="GO" id="GO:0042301">
    <property type="term" value="F:phosphate ion binding"/>
    <property type="evidence" value="ECO:0007669"/>
    <property type="project" value="InterPro"/>
</dbReference>
<dbReference type="GO" id="GO:0035435">
    <property type="term" value="P:phosphate ion transmembrane transport"/>
    <property type="evidence" value="ECO:0007669"/>
    <property type="project" value="InterPro"/>
</dbReference>
<dbReference type="CDD" id="cd13565">
    <property type="entry name" value="PBP2_PstS"/>
    <property type="match status" value="1"/>
</dbReference>
<dbReference type="Gene3D" id="3.40.190.10">
    <property type="entry name" value="Periplasmic binding protein-like II"/>
    <property type="match status" value="2"/>
</dbReference>
<dbReference type="InterPro" id="IPR005673">
    <property type="entry name" value="ABC_phos-bd_PstS"/>
</dbReference>
<dbReference type="InterPro" id="IPR024370">
    <property type="entry name" value="PBP_domain"/>
</dbReference>
<dbReference type="InterPro" id="IPR050962">
    <property type="entry name" value="Phosphate-bind_PstS"/>
</dbReference>
<dbReference type="NCBIfam" id="TIGR00975">
    <property type="entry name" value="3a0107s03"/>
    <property type="match status" value="1"/>
</dbReference>
<dbReference type="PANTHER" id="PTHR42996">
    <property type="entry name" value="PHOSPHATE-BINDING PROTEIN PSTS"/>
    <property type="match status" value="1"/>
</dbReference>
<dbReference type="PANTHER" id="PTHR42996:SF1">
    <property type="entry name" value="PHOSPHATE-BINDING PROTEIN PSTS"/>
    <property type="match status" value="1"/>
</dbReference>
<dbReference type="Pfam" id="PF12849">
    <property type="entry name" value="PBP_like_2"/>
    <property type="match status" value="1"/>
</dbReference>
<dbReference type="PIRSF" id="PIRSF002756">
    <property type="entry name" value="PstS"/>
    <property type="match status" value="1"/>
</dbReference>
<dbReference type="SUPFAM" id="SSF53850">
    <property type="entry name" value="Periplasmic binding protein-like II"/>
    <property type="match status" value="1"/>
</dbReference>
<dbReference type="PROSITE" id="PS51257">
    <property type="entry name" value="PROKAR_LIPOPROTEIN"/>
    <property type="match status" value="1"/>
</dbReference>
<name>PSTS3_MYCBP</name>
<gene>
    <name type="primary">pstS3</name>
    <name type="ordered locus">BCG_0980</name>
</gene>
<reference key="1">
    <citation type="journal article" date="2007" name="Proc. Natl. Acad. Sci. U.S.A.">
        <title>Genome plasticity of BCG and impact on vaccine efficacy.</title>
        <authorList>
            <person name="Brosch R."/>
            <person name="Gordon S.V."/>
            <person name="Garnier T."/>
            <person name="Eiglmeier K."/>
            <person name="Frigui W."/>
            <person name="Valenti P."/>
            <person name="Dos Santos S."/>
            <person name="Duthoy S."/>
            <person name="Lacroix C."/>
            <person name="Garcia-Pelayo C."/>
            <person name="Inwald J.K."/>
            <person name="Golby P."/>
            <person name="Garcia J.N."/>
            <person name="Hewinson R.G."/>
            <person name="Behr M.A."/>
            <person name="Quail M.A."/>
            <person name="Churcher C."/>
            <person name="Barrell B.G."/>
            <person name="Parkhill J."/>
            <person name="Cole S.T."/>
        </authorList>
    </citation>
    <scope>NUCLEOTIDE SEQUENCE [LARGE SCALE GENOMIC DNA]</scope>
    <source>
        <strain>BCG / Pasteur 1173P2</strain>
    </source>
</reference>
<reference key="2">
    <citation type="journal article" date="1997" name="J. Bacteriol.">
        <title>Three different putative phosphate transport receptors are encoded by the Mycobacterium tuberculosis genome and are present at the surface of Mycobacterium bovis BCG.</title>
        <authorList>
            <person name="Lefevre P."/>
            <person name="Braibant M."/>
            <person name="de Wit L."/>
            <person name="Kalai M."/>
            <person name="Roeper D."/>
            <person name="Groetzinger J."/>
            <person name="Delville J.-P."/>
            <person name="Peirs P."/>
            <person name="Ooms J."/>
            <person name="Huygen K."/>
            <person name="Content J."/>
        </authorList>
    </citation>
    <scope>SUBCELLULAR LOCATION</scope>
    <scope>INDUCTION BY PHOSPHATE STARVATION</scope>
    <source>
        <strain>BCG</strain>
    </source>
</reference>